<protein>
    <recommendedName>
        <fullName>Opioid growth factor receptor-like protein 1</fullName>
    </recommendedName>
</protein>
<gene>
    <name type="primary">Ogfrl1</name>
</gene>
<evidence type="ECO:0000256" key="1">
    <source>
        <dbReference type="SAM" id="MobiDB-lite"/>
    </source>
</evidence>
<evidence type="ECO:0000305" key="2"/>
<comment type="similarity">
    <text evidence="2">Belongs to the opioid growth factor receptor family.</text>
</comment>
<organism>
    <name type="scientific">Rattus norvegicus</name>
    <name type="common">Rat</name>
    <dbReference type="NCBI Taxonomy" id="10116"/>
    <lineage>
        <taxon>Eukaryota</taxon>
        <taxon>Metazoa</taxon>
        <taxon>Chordata</taxon>
        <taxon>Craniata</taxon>
        <taxon>Vertebrata</taxon>
        <taxon>Euteleostomi</taxon>
        <taxon>Mammalia</taxon>
        <taxon>Eutheria</taxon>
        <taxon>Euarchontoglires</taxon>
        <taxon>Glires</taxon>
        <taxon>Rodentia</taxon>
        <taxon>Myomorpha</taxon>
        <taxon>Muroidea</taxon>
        <taxon>Muridae</taxon>
        <taxon>Murinae</taxon>
        <taxon>Rattus</taxon>
    </lineage>
</organism>
<sequence length="465" mass="52821">MGNLLGGVSFREPTTVEDCDSTWQTDSEPEPEQPGPAGGGEGQEQDEREQPEQPPERAGGRPRASPVPEDHAEAAGAEQGGDSTEGNAKPKRSFYAARDLYKYRHQYPNFKDIRYQNDLSNLRFYKNKIPFKPDGVYIEEVLNKWKGDYEKLEHNHTYIQWLFPLREQGLNFYAKELTTYEIEEFKKTKEAIRRFLLAYKMMLEFFGIKLIDKTGNVARAVNWQERFQHLNESQHNYLRITRILKSLGELGYESFKSPLVKFILHEALVENTIPNIKQSALEYFVYTIRDRRERRKLLRFAQKHYTPSENFIWGPPKKEQPERSKAQKTPTLPALGSNGQTSTHKKSKDSKNSSAASHLNNKTVEEKKVASREPGEETDKPSPEASSEDTKPRNSEDDNAADQSESPPKKTVNDSAGKGECPTTSSEKDGEGENQSKDSENPENTSCHAEVVSQQNVTNPQTSSG</sequence>
<dbReference type="EMBL" id="BC099205">
    <property type="protein sequence ID" value="AAH99205.1"/>
    <property type="molecule type" value="mRNA"/>
</dbReference>
<dbReference type="RefSeq" id="NP_001020879.1">
    <property type="nucleotide sequence ID" value="NM_001025708.1"/>
</dbReference>
<dbReference type="FunCoup" id="Q4KLH3">
    <property type="interactions" value="1054"/>
</dbReference>
<dbReference type="STRING" id="10116.ENSRNOP00000019062"/>
<dbReference type="PhosphoSitePlus" id="Q4KLH3"/>
<dbReference type="PaxDb" id="10116-ENSRNOP00000019062"/>
<dbReference type="GeneID" id="316290"/>
<dbReference type="KEGG" id="rno:316290"/>
<dbReference type="UCSC" id="RGD:1308498">
    <property type="organism name" value="rat"/>
</dbReference>
<dbReference type="AGR" id="RGD:1308498"/>
<dbReference type="CTD" id="79627"/>
<dbReference type="RGD" id="1308498">
    <property type="gene designation" value="Ogfrl1"/>
</dbReference>
<dbReference type="eggNOG" id="ENOG502RA9J">
    <property type="taxonomic scope" value="Eukaryota"/>
</dbReference>
<dbReference type="InParanoid" id="Q4KLH3"/>
<dbReference type="PhylomeDB" id="Q4KLH3"/>
<dbReference type="PRO" id="PR:Q4KLH3"/>
<dbReference type="Proteomes" id="UP000002494">
    <property type="component" value="Unplaced"/>
</dbReference>
<dbReference type="GO" id="GO:0016020">
    <property type="term" value="C:membrane"/>
    <property type="evidence" value="ECO:0007669"/>
    <property type="project" value="InterPro"/>
</dbReference>
<dbReference type="GO" id="GO:0140625">
    <property type="term" value="F:opioid growth factor receptor activity"/>
    <property type="evidence" value="ECO:0007669"/>
    <property type="project" value="InterPro"/>
</dbReference>
<dbReference type="InterPro" id="IPR006757">
    <property type="entry name" value="OGF_rcpt"/>
</dbReference>
<dbReference type="InterPro" id="IPR039574">
    <property type="entry name" value="OGFr"/>
</dbReference>
<dbReference type="PANTHER" id="PTHR14015">
    <property type="entry name" value="OPIOID GROWTH FACTOR RECEPTOR OGFR ZETA-TYPE OPIOID RECEPTOR"/>
    <property type="match status" value="1"/>
</dbReference>
<dbReference type="PANTHER" id="PTHR14015:SF0">
    <property type="entry name" value="OPIOID GROWTH FACTOR RECEPTOR-LIKE PROTEIN 1"/>
    <property type="match status" value="1"/>
</dbReference>
<dbReference type="Pfam" id="PF04664">
    <property type="entry name" value="OGFr_N"/>
    <property type="match status" value="1"/>
</dbReference>
<accession>Q4KLH3</accession>
<keyword id="KW-0675">Receptor</keyword>
<keyword id="KW-1185">Reference proteome</keyword>
<name>OGRL1_RAT</name>
<proteinExistence type="evidence at transcript level"/>
<feature type="chain" id="PRO_0000314144" description="Opioid growth factor receptor-like protein 1">
    <location>
        <begin position="1"/>
        <end position="465"/>
    </location>
</feature>
<feature type="region of interest" description="Disordered" evidence="1">
    <location>
        <begin position="1"/>
        <end position="89"/>
    </location>
</feature>
<feature type="region of interest" description="Disordered" evidence="1">
    <location>
        <begin position="309"/>
        <end position="465"/>
    </location>
</feature>
<feature type="compositionally biased region" description="Basic and acidic residues" evidence="1">
    <location>
        <begin position="48"/>
        <end position="59"/>
    </location>
</feature>
<feature type="compositionally biased region" description="Basic and acidic residues" evidence="1">
    <location>
        <begin position="316"/>
        <end position="325"/>
    </location>
</feature>
<feature type="compositionally biased region" description="Basic and acidic residues" evidence="1">
    <location>
        <begin position="363"/>
        <end position="396"/>
    </location>
</feature>
<feature type="compositionally biased region" description="Basic and acidic residues" evidence="1">
    <location>
        <begin position="426"/>
        <end position="440"/>
    </location>
</feature>
<feature type="compositionally biased region" description="Polar residues" evidence="1">
    <location>
        <begin position="442"/>
        <end position="465"/>
    </location>
</feature>
<reference key="1">
    <citation type="journal article" date="2004" name="Genome Res.">
        <title>The status, quality, and expansion of the NIH full-length cDNA project: the Mammalian Gene Collection (MGC).</title>
        <authorList>
            <consortium name="The MGC Project Team"/>
        </authorList>
    </citation>
    <scope>NUCLEOTIDE SEQUENCE [LARGE SCALE MRNA]</scope>
    <source>
        <tissue>Thymus</tissue>
    </source>
</reference>